<keyword id="KW-1003">Cell membrane</keyword>
<keyword id="KW-1015">Disulfide bond</keyword>
<keyword id="KW-0297">G-protein coupled receptor</keyword>
<keyword id="KW-0325">Glycoprotein</keyword>
<keyword id="KW-0472">Membrane</keyword>
<keyword id="KW-0675">Receptor</keyword>
<keyword id="KW-1185">Reference proteome</keyword>
<keyword id="KW-0807">Transducer</keyword>
<keyword id="KW-0812">Transmembrane</keyword>
<keyword id="KW-1133">Transmembrane helix</keyword>
<dbReference type="EMBL" id="AF380190">
    <property type="protein sequence ID" value="AAK71241.1"/>
    <property type="molecule type" value="Genomic_DNA"/>
</dbReference>
<dbReference type="RefSeq" id="NP_783192.1">
    <property type="nucleotide sequence ID" value="NM_175602.1"/>
</dbReference>
<dbReference type="SMR" id="Q923Y6"/>
<dbReference type="FunCoup" id="Q923Y6">
    <property type="interactions" value="34"/>
</dbReference>
<dbReference type="STRING" id="10116.ENSRNOP00000037691"/>
<dbReference type="GlyCosmos" id="Q923Y6">
    <property type="glycosylation" value="1 site, No reported glycans"/>
</dbReference>
<dbReference type="GlyGen" id="Q923Y6">
    <property type="glycosylation" value="1 site"/>
</dbReference>
<dbReference type="PhosphoSitePlus" id="Q923Y6"/>
<dbReference type="PaxDb" id="10116-ENSRNOP00000037691"/>
<dbReference type="GeneID" id="319107"/>
<dbReference type="KEGG" id="rno:319107"/>
<dbReference type="AGR" id="RGD:631383"/>
<dbReference type="CTD" id="134860"/>
<dbReference type="RGD" id="631383">
    <property type="gene designation" value="Taar9"/>
</dbReference>
<dbReference type="VEuPathDB" id="HostDB:ENSRNOG00000026096"/>
<dbReference type="eggNOG" id="KOG3656">
    <property type="taxonomic scope" value="Eukaryota"/>
</dbReference>
<dbReference type="HOGENOM" id="CLU_009579_11_0_1"/>
<dbReference type="InParanoid" id="Q923Y6"/>
<dbReference type="OrthoDB" id="41346at9989"/>
<dbReference type="PhylomeDB" id="Q923Y6"/>
<dbReference type="Reactome" id="R-RNO-375280">
    <property type="pathway name" value="Amine ligand-binding receptors"/>
</dbReference>
<dbReference type="PRO" id="PR:Q923Y6"/>
<dbReference type="Proteomes" id="UP000002494">
    <property type="component" value="Chromosome 1"/>
</dbReference>
<dbReference type="GO" id="GO:0005886">
    <property type="term" value="C:plasma membrane"/>
    <property type="evidence" value="ECO:0000250"/>
    <property type="project" value="UniProtKB"/>
</dbReference>
<dbReference type="GO" id="GO:0001594">
    <property type="term" value="F:trace-amine receptor activity"/>
    <property type="evidence" value="ECO:0000314"/>
    <property type="project" value="UniProtKB"/>
</dbReference>
<dbReference type="GO" id="GO:0007189">
    <property type="term" value="P:adenylate cyclase-activating G protein-coupled receptor signaling pathway"/>
    <property type="evidence" value="ECO:0000250"/>
    <property type="project" value="UniProtKB"/>
</dbReference>
<dbReference type="GO" id="GO:0007186">
    <property type="term" value="P:G protein-coupled receptor signaling pathway"/>
    <property type="evidence" value="ECO:0000266"/>
    <property type="project" value="RGD"/>
</dbReference>
<dbReference type="CDD" id="cd15316">
    <property type="entry name" value="7tmA_TAAR6_8_9"/>
    <property type="match status" value="1"/>
</dbReference>
<dbReference type="FunFam" id="1.20.1070.10:FF:000030">
    <property type="entry name" value="trace amine-associated receptor 1"/>
    <property type="match status" value="1"/>
</dbReference>
<dbReference type="Gene3D" id="1.20.1070.10">
    <property type="entry name" value="Rhodopsin 7-helix transmembrane proteins"/>
    <property type="match status" value="1"/>
</dbReference>
<dbReference type="InterPro" id="IPR000276">
    <property type="entry name" value="GPCR_Rhodpsn"/>
</dbReference>
<dbReference type="InterPro" id="IPR017452">
    <property type="entry name" value="GPCR_Rhodpsn_7TM"/>
</dbReference>
<dbReference type="InterPro" id="IPR050569">
    <property type="entry name" value="TAAR"/>
</dbReference>
<dbReference type="InterPro" id="IPR009133">
    <property type="entry name" value="TAAR1"/>
</dbReference>
<dbReference type="InterPro" id="IPR009132">
    <property type="entry name" value="TAAR_fam"/>
</dbReference>
<dbReference type="PANTHER" id="PTHR24249">
    <property type="entry name" value="HISTAMINE RECEPTOR-RELATED G-PROTEIN COUPLED RECEPTOR"/>
    <property type="match status" value="1"/>
</dbReference>
<dbReference type="PANTHER" id="PTHR24249:SF79">
    <property type="entry name" value="TRACE AMINE-ASSOCIATED RECEPTOR 9"/>
    <property type="match status" value="1"/>
</dbReference>
<dbReference type="Pfam" id="PF00001">
    <property type="entry name" value="7tm_1"/>
    <property type="match status" value="1"/>
</dbReference>
<dbReference type="PRINTS" id="PR00237">
    <property type="entry name" value="GPCRRHODOPSN"/>
</dbReference>
<dbReference type="PRINTS" id="PR01831">
    <property type="entry name" value="TRACEAMINE1R"/>
</dbReference>
<dbReference type="PRINTS" id="PR01830">
    <property type="entry name" value="TRACEAMINER"/>
</dbReference>
<dbReference type="SMART" id="SM01381">
    <property type="entry name" value="7TM_GPCR_Srsx"/>
    <property type="match status" value="1"/>
</dbReference>
<dbReference type="SUPFAM" id="SSF81321">
    <property type="entry name" value="Family A G protein-coupled receptor-like"/>
    <property type="match status" value="1"/>
</dbReference>
<dbReference type="PROSITE" id="PS00237">
    <property type="entry name" value="G_PROTEIN_RECEP_F1_1"/>
    <property type="match status" value="1"/>
</dbReference>
<dbReference type="PROSITE" id="PS50262">
    <property type="entry name" value="G_PROTEIN_RECEP_F1_2"/>
    <property type="match status" value="1"/>
</dbReference>
<reference key="1">
    <citation type="journal article" date="2001" name="Proc. Natl. Acad. Sci. U.S.A.">
        <title>Trace amines: identification of a family of mammalian G protein-coupled receptors.</title>
        <authorList>
            <person name="Borowsky B."/>
            <person name="Adham N."/>
            <person name="Jones K.A."/>
            <person name="Raddatz R."/>
            <person name="Artymyshyn R."/>
            <person name="Ogozalek K.L."/>
            <person name="Durkin M.M."/>
            <person name="Lakhlani P.P."/>
            <person name="Bonini J.A."/>
            <person name="Pathirana S."/>
            <person name="Boyle N."/>
            <person name="Pu X."/>
            <person name="Kouranova E."/>
            <person name="Lichtblau H."/>
            <person name="Ochoa F.Y."/>
            <person name="Branchek T.A."/>
            <person name="Gerald C."/>
        </authorList>
    </citation>
    <scope>NUCLEOTIDE SEQUENCE [GENOMIC DNA]</scope>
    <source>
        <strain>Sprague-Dawley</strain>
    </source>
</reference>
<reference key="2">
    <citation type="journal article" date="2012" name="ACS Chem. Biol.">
        <title>Agonists for 13 trace amine-associated receptors provide insight into the molecular basis of odor selectivity.</title>
        <authorList>
            <person name="Ferrero D.M."/>
            <person name="Wacker D."/>
            <person name="Roque M.A."/>
            <person name="Baldwin M.W."/>
            <person name="Stevens R.C."/>
            <person name="Liberles S.D."/>
        </authorList>
    </citation>
    <scope>FUNCTION</scope>
</reference>
<reference key="3">
    <citation type="journal article" date="2021" name="Int. J. Mol. Sci.">
        <title>Genetic deletion of trace-amine associated receptor 9 (TAAR9) in rats leads to decreased blood cholesterol levels.</title>
        <authorList>
            <person name="Murtazina R.Z."/>
            <person name="Zhukov I.S."/>
            <person name="Korenkova O.M."/>
            <person name="Popova E.A."/>
            <person name="Kuvarzin S.R."/>
            <person name="Efimova E.V."/>
            <person name="Kubarskaya L.G."/>
            <person name="Batotsyrenova E.G."/>
            <person name="Zolotoverkhaya E.A."/>
            <person name="Vaganova A.N."/>
            <person name="Apryatin S.A."/>
            <person name="Alenina N.V."/>
            <person name="Gainetdinov R.R."/>
        </authorList>
    </citation>
    <scope>DISRUPTION PHENOTYPE</scope>
</reference>
<reference key="4">
    <citation type="journal article" date="2021" name="J. Biol. Chem.">
        <title>Convergent olfactory trace amine-associated receptors detect biogenic polyamines with distinct motifs via a conserved binding site.</title>
        <authorList>
            <person name="Jia L."/>
            <person name="Li S."/>
            <person name="Dai W."/>
            <person name="Guo L."/>
            <person name="Xu Z."/>
            <person name="Scott A.M."/>
            <person name="Zhang Z."/>
            <person name="Ren J."/>
            <person name="Zhang Q."/>
            <person name="Dexheimer T.S."/>
            <person name="Chung-Davidson Y.W."/>
            <person name="Neubig R.R."/>
            <person name="Li Q."/>
            <person name="Li W."/>
        </authorList>
    </citation>
    <scope>FUNCTION</scope>
</reference>
<reference key="5">
    <citation type="journal article" date="2022" name="Biomolecules">
        <title>Gut microbiota alterations in trace amine-associated receptor 9 (TAAR9) knockout rats.</title>
        <authorList>
            <person name="Zhukov I.S."/>
            <person name="Vaganova A.N."/>
            <person name="Murtazina R.Z."/>
            <person name="Alferova L.S."/>
            <person name="Ermolenko E.I."/>
            <person name="Gainetdinov R.R."/>
        </authorList>
    </citation>
    <scope>DISRUPTION PHENOTYPE</scope>
    <scope>TISSUE SPECIFICITY</scope>
</reference>
<gene>
    <name evidence="9 10" type="primary">Taar9</name>
    <name evidence="8" type="synonym">Ta3</name>
    <name evidence="8" type="synonym">Tar3</name>
    <name evidence="8" type="synonym">Trar3</name>
</gene>
<name>TAAR9_RAT</name>
<protein>
    <recommendedName>
        <fullName evidence="9">Trace amine-associated receptor 9</fullName>
        <shortName>TaR-9</shortName>
        <shortName evidence="9">Trace amine receptor 9</shortName>
    </recommendedName>
    <alternativeName>
        <fullName evidence="8">Trace amine receptor 3</fullName>
        <shortName evidence="8">TaR-3</shortName>
    </alternativeName>
</protein>
<sequence length="338" mass="37846">MELCYENVNGSCIKSSYSPWPRAILYAVLGLGALLAVFGNLLVITAILHFKQLHTPTNFLVASLACADFLVGVTVMPFSTVRSVEGCWYFGDTYCKFHTCFDTSFCFASLFHLCCISIDRYVAVTDPLTYPTKFTISVSGVCIALSWFFSVTYSFSIFYTGANEEGIEELVVALTCVGGCQAPLNQNWVLLCFLLFFLPTVVMVFLYGRIFLVAKQQARKIEGSANQPQASSESYKERVARRERKAAKTLGIAMAAFLVSWLPYIIDAVIDAYMNFITPAYVYEILVWCVYYNSAMNPLIYAFFYPWFRKAIKLIVSGKVFRADSSRTNLFSEEAGAG</sequence>
<feature type="chain" id="PRO_0000070183" description="Trace amine-associated receptor 9">
    <location>
        <begin position="1"/>
        <end position="338"/>
    </location>
</feature>
<feature type="topological domain" description="Extracellular" evidence="1">
    <location>
        <begin position="1"/>
        <end position="23"/>
    </location>
</feature>
<feature type="transmembrane region" description="Helical; Name=1" evidence="1">
    <location>
        <begin position="24"/>
        <end position="48"/>
    </location>
</feature>
<feature type="topological domain" description="Cytoplasmic" evidence="1">
    <location>
        <begin position="49"/>
        <end position="58"/>
    </location>
</feature>
<feature type="transmembrane region" description="Helical; Name=2" evidence="1">
    <location>
        <begin position="59"/>
        <end position="80"/>
    </location>
</feature>
<feature type="topological domain" description="Extracellular" evidence="1">
    <location>
        <begin position="81"/>
        <end position="95"/>
    </location>
</feature>
<feature type="transmembrane region" description="Helical; Name=3" evidence="1">
    <location>
        <begin position="96"/>
        <end position="118"/>
    </location>
</feature>
<feature type="topological domain" description="Cytoplasmic" evidence="1">
    <location>
        <begin position="119"/>
        <end position="138"/>
    </location>
</feature>
<feature type="transmembrane region" description="Helical; Name=4" evidence="1">
    <location>
        <begin position="139"/>
        <end position="160"/>
    </location>
</feature>
<feature type="topological domain" description="Extracellular" evidence="1">
    <location>
        <begin position="161"/>
        <end position="186"/>
    </location>
</feature>
<feature type="transmembrane region" description="Helical; Name=5" evidence="1">
    <location>
        <begin position="187"/>
        <end position="208"/>
    </location>
</feature>
<feature type="topological domain" description="Cytoplasmic" evidence="1">
    <location>
        <begin position="209"/>
        <end position="246"/>
    </location>
</feature>
<feature type="transmembrane region" description="Helical; Name=6" evidence="1">
    <location>
        <begin position="247"/>
        <end position="270"/>
    </location>
</feature>
<feature type="topological domain" description="Extracellular" evidence="1">
    <location>
        <begin position="271"/>
        <end position="283"/>
    </location>
</feature>
<feature type="transmembrane region" description="Helical; Name=7" evidence="1">
    <location>
        <begin position="284"/>
        <end position="304"/>
    </location>
</feature>
<feature type="topological domain" description="Cytoplasmic" evidence="1">
    <location>
        <begin position="305"/>
        <end position="338"/>
    </location>
</feature>
<feature type="region of interest" description="Extracellular Loop 2 (ECL2)" evidence="1">
    <location>
        <begin position="164"/>
        <end position="177"/>
    </location>
</feature>
<feature type="binding site" evidence="1">
    <location>
        <position position="102"/>
    </location>
    <ligand>
        <name>spermidine</name>
        <dbReference type="ChEBI" id="CHEBI:57834"/>
    </ligand>
</feature>
<feature type="binding site" evidence="1">
    <location>
        <position position="103"/>
    </location>
    <ligand>
        <name>spermidine</name>
        <dbReference type="ChEBI" id="CHEBI:57834"/>
    </ligand>
</feature>
<feature type="glycosylation site" description="N-linked (GlcNAc...) asparagine" evidence="2">
    <location>
        <position position="9"/>
    </location>
</feature>
<feature type="disulfide bond" evidence="1">
    <location>
        <begin position="12"/>
        <end position="176"/>
    </location>
</feature>
<feature type="disulfide bond" evidence="3">
    <location>
        <begin position="95"/>
        <end position="180"/>
    </location>
</feature>
<comment type="function">
    <text evidence="1 4 6">Olfactory receptor specific for trace amines, such as triethylamine, N-methylpiperidine, N,N-dimethylcyclohexylamine (DMCHA), beta-phenylethylamine (beta-PEA), cadaverine (CAD) and polyamines such as spermidine (PubMed:22545963, PubMed:34600890). Trace amine compounds are enriched in animal body fluids and act on trace amine-associated receptors (TAARs) to elicit both intraspecific and interspecific innate behaviors (By similarity). Trace amine-binding causes a conformation change that triggers signaling via G(s)-class of G alpha proteins (GNAL or GNAS) (By similarity). In mature olfactory sensory neurons, Taar9 is coupled with GNAL/G(olf)G alpha protein and mediates activation of adenylate cyclase activity to activate cAMP signaling and eventually transmit odorant signals to achieve membrane depolarization (By similarity). In immature olfactory sensory neurons, Taar9 is coupled with GNAS/G(s) G alpha proteins (By similarity).</text>
</comment>
<comment type="subcellular location">
    <subcellularLocation>
        <location evidence="1">Cell membrane</location>
        <topology evidence="1">Multi-pass membrane protein</topology>
    </subcellularLocation>
</comment>
<comment type="tissue specificity">
    <text evidence="7">Mainly expressed in neurons of the olfactory epithelium (PubMed:36551251). Also expressed in the intestine (PubMed:36551251).</text>
</comment>
<comment type="domain">
    <text evidence="1">In addition to the well known disulfide bond common to G-protein coupled receptor 1 family, trace amine-associated receptors (TAARs) contain an unique disulfide bond (Cys-12-Cys-176) connecting the N-terminus to the extracellular Loop 2 (ECL2), which is required for agonist-induced receptor activation.</text>
</comment>
<comment type="disruption phenotype">
    <text evidence="5 7">No visible phenotype (PubMed:33799339). Decreased low-density lipoprotein cholesterol levels in the blood (PubMed:33799339). Alterations of gut microbiota are also observed (PubMed:36551251).</text>
</comment>
<comment type="similarity">
    <text evidence="3">Belongs to the G-protein coupled receptor 1 family.</text>
</comment>
<accession>Q923Y6</accession>
<proteinExistence type="evidence at transcript level"/>
<organism>
    <name type="scientific">Rattus norvegicus</name>
    <name type="common">Rat</name>
    <dbReference type="NCBI Taxonomy" id="10116"/>
    <lineage>
        <taxon>Eukaryota</taxon>
        <taxon>Metazoa</taxon>
        <taxon>Chordata</taxon>
        <taxon>Craniata</taxon>
        <taxon>Vertebrata</taxon>
        <taxon>Euteleostomi</taxon>
        <taxon>Mammalia</taxon>
        <taxon>Eutheria</taxon>
        <taxon>Euarchontoglires</taxon>
        <taxon>Glires</taxon>
        <taxon>Rodentia</taxon>
        <taxon>Myomorpha</taxon>
        <taxon>Muroidea</taxon>
        <taxon>Muridae</taxon>
        <taxon>Murinae</taxon>
        <taxon>Rattus</taxon>
    </lineage>
</organism>
<evidence type="ECO:0000250" key="1">
    <source>
        <dbReference type="UniProtKB" id="Q5QD04"/>
    </source>
</evidence>
<evidence type="ECO:0000255" key="2"/>
<evidence type="ECO:0000255" key="3">
    <source>
        <dbReference type="PROSITE-ProRule" id="PRU00521"/>
    </source>
</evidence>
<evidence type="ECO:0000269" key="4">
    <source>
    </source>
</evidence>
<evidence type="ECO:0000269" key="5">
    <source>
    </source>
</evidence>
<evidence type="ECO:0000269" key="6">
    <source>
    </source>
</evidence>
<evidence type="ECO:0000269" key="7">
    <source>
    </source>
</evidence>
<evidence type="ECO:0000303" key="8">
    <source>
    </source>
</evidence>
<evidence type="ECO:0000303" key="9">
    <source>
    </source>
</evidence>
<evidence type="ECO:0000312" key="10">
    <source>
        <dbReference type="RGD" id="631383"/>
    </source>
</evidence>